<evidence type="ECO:0000255" key="1">
    <source>
        <dbReference type="HAMAP-Rule" id="MF_01225"/>
    </source>
</evidence>
<evidence type="ECO:0000255" key="2">
    <source>
        <dbReference type="PROSITE-ProRule" id="PRU01266"/>
    </source>
</evidence>
<proteinExistence type="inferred from homology"/>
<protein>
    <recommendedName>
        <fullName evidence="1">GTP 3',8-cyclase</fullName>
        <ecNumber evidence="1">4.1.99.22</ecNumber>
    </recommendedName>
    <alternativeName>
        <fullName evidence="1">Molybdenum cofactor biosynthesis protein A</fullName>
    </alternativeName>
</protein>
<organism>
    <name type="scientific">Stenotrophomonas maltophilia (strain K279a)</name>
    <dbReference type="NCBI Taxonomy" id="522373"/>
    <lineage>
        <taxon>Bacteria</taxon>
        <taxon>Pseudomonadati</taxon>
        <taxon>Pseudomonadota</taxon>
        <taxon>Gammaproteobacteria</taxon>
        <taxon>Lysobacterales</taxon>
        <taxon>Lysobacteraceae</taxon>
        <taxon>Stenotrophomonas</taxon>
        <taxon>Stenotrophomonas maltophilia group</taxon>
    </lineage>
</organism>
<keyword id="KW-0004">4Fe-4S</keyword>
<keyword id="KW-0342">GTP-binding</keyword>
<keyword id="KW-0408">Iron</keyword>
<keyword id="KW-0411">Iron-sulfur</keyword>
<keyword id="KW-0456">Lyase</keyword>
<keyword id="KW-0479">Metal-binding</keyword>
<keyword id="KW-0501">Molybdenum cofactor biosynthesis</keyword>
<keyword id="KW-0547">Nucleotide-binding</keyword>
<keyword id="KW-1185">Reference proteome</keyword>
<keyword id="KW-0949">S-adenosyl-L-methionine</keyword>
<name>MOAA_STRMK</name>
<accession>B2FUM0</accession>
<comment type="function">
    <text evidence="1">Catalyzes the cyclization of GTP to (8S)-3',8-cyclo-7,8-dihydroguanosine 5'-triphosphate.</text>
</comment>
<comment type="catalytic activity">
    <reaction evidence="1">
        <text>GTP + AH2 + S-adenosyl-L-methionine = (8S)-3',8-cyclo-7,8-dihydroguanosine 5'-triphosphate + 5'-deoxyadenosine + L-methionine + A + H(+)</text>
        <dbReference type="Rhea" id="RHEA:49576"/>
        <dbReference type="ChEBI" id="CHEBI:13193"/>
        <dbReference type="ChEBI" id="CHEBI:15378"/>
        <dbReference type="ChEBI" id="CHEBI:17319"/>
        <dbReference type="ChEBI" id="CHEBI:17499"/>
        <dbReference type="ChEBI" id="CHEBI:37565"/>
        <dbReference type="ChEBI" id="CHEBI:57844"/>
        <dbReference type="ChEBI" id="CHEBI:59789"/>
        <dbReference type="ChEBI" id="CHEBI:131766"/>
        <dbReference type="EC" id="4.1.99.22"/>
    </reaction>
</comment>
<comment type="cofactor">
    <cofactor evidence="1">
        <name>[4Fe-4S] cluster</name>
        <dbReference type="ChEBI" id="CHEBI:49883"/>
    </cofactor>
    <text evidence="1">Binds 2 [4Fe-4S] clusters. Binds 1 [4Fe-4S] cluster coordinated with 3 cysteines and an exchangeable S-adenosyl-L-methionine and 1 [4Fe-4S] cluster coordinated with 3 cysteines and the GTP-derived substrate.</text>
</comment>
<comment type="pathway">
    <text evidence="1">Cofactor biosynthesis; molybdopterin biosynthesis.</text>
</comment>
<comment type="subunit">
    <text evidence="1">Monomer and homodimer.</text>
</comment>
<comment type="similarity">
    <text evidence="1">Belongs to the radical SAM superfamily. MoaA family.</text>
</comment>
<gene>
    <name evidence="1" type="primary">moaA</name>
    <name type="ordered locus">Smlt2782</name>
</gene>
<sequence length="326" mass="36064">MSQLTDGFGRSFPYLRLSLTEACNFRCSYCLPDGYQADGRPRFLQVDEIARLVRAFAALGMSKIRLTGGEPSLRKDLDEIIATVAAVPGIRKVAITTNGTLLPRRLPGWHRAGLTALNVSMDSLQRERFKTITGHDRLPEIEQGLALAQALGLPAIKLNAVLLRGLNDDELPQWMDYLRGRPFSVRFIELMRTGDNEAYFQRHHLRADVVIEQLLAAGWHERPRAADAGPAREFGHPDHRGSIGIIAPYSRDFCKGCNRLRVTAKGDLRLCLFGEFGVPLRPLLQRDEDHDALLARITTQLGLKAAGHGLHQGQTGLTPHLASIGG</sequence>
<reference key="1">
    <citation type="journal article" date="2008" name="Genome Biol.">
        <title>The complete genome, comparative and functional analysis of Stenotrophomonas maltophilia reveals an organism heavily shielded by drug resistance determinants.</title>
        <authorList>
            <person name="Crossman L.C."/>
            <person name="Gould V.C."/>
            <person name="Dow J.M."/>
            <person name="Vernikos G.S."/>
            <person name="Okazaki A."/>
            <person name="Sebaihia M."/>
            <person name="Saunders D."/>
            <person name="Arrowsmith C."/>
            <person name="Carver T."/>
            <person name="Peters N."/>
            <person name="Adlem E."/>
            <person name="Kerhornou A."/>
            <person name="Lord A."/>
            <person name="Murphy L."/>
            <person name="Seeger K."/>
            <person name="Squares R."/>
            <person name="Rutter S."/>
            <person name="Quail M.A."/>
            <person name="Rajandream M.A."/>
            <person name="Harris D."/>
            <person name="Churcher C."/>
            <person name="Bentley S.D."/>
            <person name="Parkhill J."/>
            <person name="Thomson N.R."/>
            <person name="Avison M.B."/>
        </authorList>
    </citation>
    <scope>NUCLEOTIDE SEQUENCE [LARGE SCALE GENOMIC DNA]</scope>
    <source>
        <strain>K279a</strain>
    </source>
</reference>
<feature type="chain" id="PRO_1000139349" description="GTP 3',8-cyclase">
    <location>
        <begin position="1"/>
        <end position="326"/>
    </location>
</feature>
<feature type="domain" description="Radical SAM core" evidence="2">
    <location>
        <begin position="7"/>
        <end position="232"/>
    </location>
</feature>
<feature type="binding site" evidence="1">
    <location>
        <position position="16"/>
    </location>
    <ligand>
        <name>GTP</name>
        <dbReference type="ChEBI" id="CHEBI:37565"/>
    </ligand>
</feature>
<feature type="binding site" evidence="1">
    <location>
        <position position="23"/>
    </location>
    <ligand>
        <name>[4Fe-4S] cluster</name>
        <dbReference type="ChEBI" id="CHEBI:49883"/>
        <label>1</label>
        <note>4Fe-4S-S-AdoMet</note>
    </ligand>
</feature>
<feature type="binding site" evidence="1">
    <location>
        <position position="27"/>
    </location>
    <ligand>
        <name>[4Fe-4S] cluster</name>
        <dbReference type="ChEBI" id="CHEBI:49883"/>
        <label>1</label>
        <note>4Fe-4S-S-AdoMet</note>
    </ligand>
</feature>
<feature type="binding site" evidence="1">
    <location>
        <position position="29"/>
    </location>
    <ligand>
        <name>S-adenosyl-L-methionine</name>
        <dbReference type="ChEBI" id="CHEBI:59789"/>
    </ligand>
</feature>
<feature type="binding site" evidence="1">
    <location>
        <position position="30"/>
    </location>
    <ligand>
        <name>[4Fe-4S] cluster</name>
        <dbReference type="ChEBI" id="CHEBI:49883"/>
        <label>1</label>
        <note>4Fe-4S-S-AdoMet</note>
    </ligand>
</feature>
<feature type="binding site" evidence="1">
    <location>
        <position position="65"/>
    </location>
    <ligand>
        <name>GTP</name>
        <dbReference type="ChEBI" id="CHEBI:37565"/>
    </ligand>
</feature>
<feature type="binding site" evidence="1">
    <location>
        <position position="69"/>
    </location>
    <ligand>
        <name>S-adenosyl-L-methionine</name>
        <dbReference type="ChEBI" id="CHEBI:59789"/>
    </ligand>
</feature>
<feature type="binding site" evidence="1">
    <location>
        <position position="96"/>
    </location>
    <ligand>
        <name>GTP</name>
        <dbReference type="ChEBI" id="CHEBI:37565"/>
    </ligand>
</feature>
<feature type="binding site" evidence="1">
    <location>
        <position position="120"/>
    </location>
    <ligand>
        <name>S-adenosyl-L-methionine</name>
        <dbReference type="ChEBI" id="CHEBI:59789"/>
    </ligand>
</feature>
<feature type="binding site" evidence="1">
    <location>
        <position position="157"/>
    </location>
    <ligand>
        <name>GTP</name>
        <dbReference type="ChEBI" id="CHEBI:37565"/>
    </ligand>
</feature>
<feature type="binding site" evidence="1">
    <location>
        <position position="191"/>
    </location>
    <ligand>
        <name>S-adenosyl-L-methionine</name>
        <dbReference type="ChEBI" id="CHEBI:59789"/>
    </ligand>
</feature>
<feature type="binding site" evidence="1">
    <location>
        <position position="254"/>
    </location>
    <ligand>
        <name>[4Fe-4S] cluster</name>
        <dbReference type="ChEBI" id="CHEBI:49883"/>
        <label>2</label>
        <note>4Fe-4S-substrate</note>
    </ligand>
</feature>
<feature type="binding site" evidence="1">
    <location>
        <position position="257"/>
    </location>
    <ligand>
        <name>[4Fe-4S] cluster</name>
        <dbReference type="ChEBI" id="CHEBI:49883"/>
        <label>2</label>
        <note>4Fe-4S-substrate</note>
    </ligand>
</feature>
<feature type="binding site" evidence="1">
    <location>
        <begin position="259"/>
        <end position="261"/>
    </location>
    <ligand>
        <name>GTP</name>
        <dbReference type="ChEBI" id="CHEBI:37565"/>
    </ligand>
</feature>
<feature type="binding site" evidence="1">
    <location>
        <position position="271"/>
    </location>
    <ligand>
        <name>[4Fe-4S] cluster</name>
        <dbReference type="ChEBI" id="CHEBI:49883"/>
        <label>2</label>
        <note>4Fe-4S-substrate</note>
    </ligand>
</feature>
<dbReference type="EC" id="4.1.99.22" evidence="1"/>
<dbReference type="EMBL" id="AM743169">
    <property type="protein sequence ID" value="CAQ46249.1"/>
    <property type="molecule type" value="Genomic_DNA"/>
</dbReference>
<dbReference type="RefSeq" id="WP_012480479.1">
    <property type="nucleotide sequence ID" value="NC_010943.1"/>
</dbReference>
<dbReference type="SMR" id="B2FUM0"/>
<dbReference type="EnsemblBacteria" id="CAQ46249">
    <property type="protein sequence ID" value="CAQ46249"/>
    <property type="gene ID" value="Smlt2782"/>
</dbReference>
<dbReference type="KEGG" id="sml:Smlt2782"/>
<dbReference type="PATRIC" id="fig|522373.3.peg.2618"/>
<dbReference type="eggNOG" id="COG2896">
    <property type="taxonomic scope" value="Bacteria"/>
</dbReference>
<dbReference type="HOGENOM" id="CLU_009273_0_1_6"/>
<dbReference type="UniPathway" id="UPA00344"/>
<dbReference type="Proteomes" id="UP000008840">
    <property type="component" value="Chromosome"/>
</dbReference>
<dbReference type="GO" id="GO:0051539">
    <property type="term" value="F:4 iron, 4 sulfur cluster binding"/>
    <property type="evidence" value="ECO:0007669"/>
    <property type="project" value="UniProtKB-UniRule"/>
</dbReference>
<dbReference type="GO" id="GO:0061799">
    <property type="term" value="F:cyclic pyranopterin monophosphate synthase activity"/>
    <property type="evidence" value="ECO:0007669"/>
    <property type="project" value="TreeGrafter"/>
</dbReference>
<dbReference type="GO" id="GO:0061798">
    <property type="term" value="F:GTP 3',8'-cyclase activity"/>
    <property type="evidence" value="ECO:0007669"/>
    <property type="project" value="UniProtKB-UniRule"/>
</dbReference>
<dbReference type="GO" id="GO:0005525">
    <property type="term" value="F:GTP binding"/>
    <property type="evidence" value="ECO:0007669"/>
    <property type="project" value="UniProtKB-UniRule"/>
</dbReference>
<dbReference type="GO" id="GO:0046872">
    <property type="term" value="F:metal ion binding"/>
    <property type="evidence" value="ECO:0007669"/>
    <property type="project" value="UniProtKB-KW"/>
</dbReference>
<dbReference type="GO" id="GO:1904047">
    <property type="term" value="F:S-adenosyl-L-methionine binding"/>
    <property type="evidence" value="ECO:0007669"/>
    <property type="project" value="UniProtKB-UniRule"/>
</dbReference>
<dbReference type="GO" id="GO:0006777">
    <property type="term" value="P:Mo-molybdopterin cofactor biosynthetic process"/>
    <property type="evidence" value="ECO:0007669"/>
    <property type="project" value="UniProtKB-UniRule"/>
</dbReference>
<dbReference type="CDD" id="cd01335">
    <property type="entry name" value="Radical_SAM"/>
    <property type="match status" value="1"/>
</dbReference>
<dbReference type="CDD" id="cd21117">
    <property type="entry name" value="Twitch_MoaA"/>
    <property type="match status" value="1"/>
</dbReference>
<dbReference type="Gene3D" id="3.20.20.70">
    <property type="entry name" value="Aldolase class I"/>
    <property type="match status" value="1"/>
</dbReference>
<dbReference type="HAMAP" id="MF_01225_B">
    <property type="entry name" value="MoaA_B"/>
    <property type="match status" value="1"/>
</dbReference>
<dbReference type="InterPro" id="IPR013785">
    <property type="entry name" value="Aldolase_TIM"/>
</dbReference>
<dbReference type="InterPro" id="IPR006638">
    <property type="entry name" value="Elp3/MiaA/NifB-like_rSAM"/>
</dbReference>
<dbReference type="InterPro" id="IPR013483">
    <property type="entry name" value="MoaA"/>
</dbReference>
<dbReference type="InterPro" id="IPR000385">
    <property type="entry name" value="MoaA_NifB_PqqE_Fe-S-bd_CS"/>
</dbReference>
<dbReference type="InterPro" id="IPR010505">
    <property type="entry name" value="MoaA_twitch"/>
</dbReference>
<dbReference type="InterPro" id="IPR050105">
    <property type="entry name" value="MoCo_biosynth_MoaA/MoaC"/>
</dbReference>
<dbReference type="InterPro" id="IPR007197">
    <property type="entry name" value="rSAM"/>
</dbReference>
<dbReference type="NCBIfam" id="TIGR02666">
    <property type="entry name" value="moaA"/>
    <property type="match status" value="1"/>
</dbReference>
<dbReference type="PANTHER" id="PTHR22960:SF28">
    <property type="entry name" value="GTP 3',8-CYCLASE"/>
    <property type="match status" value="1"/>
</dbReference>
<dbReference type="PANTHER" id="PTHR22960">
    <property type="entry name" value="MOLYBDOPTERIN COFACTOR SYNTHESIS PROTEIN A"/>
    <property type="match status" value="1"/>
</dbReference>
<dbReference type="Pfam" id="PF06463">
    <property type="entry name" value="Mob_synth_C"/>
    <property type="match status" value="1"/>
</dbReference>
<dbReference type="Pfam" id="PF04055">
    <property type="entry name" value="Radical_SAM"/>
    <property type="match status" value="1"/>
</dbReference>
<dbReference type="SFLD" id="SFLDG01383">
    <property type="entry name" value="cyclic_pyranopterin_phosphate"/>
    <property type="match status" value="1"/>
</dbReference>
<dbReference type="SFLD" id="SFLDG01386">
    <property type="entry name" value="main_SPASM_domain-containing"/>
    <property type="match status" value="1"/>
</dbReference>
<dbReference type="SMART" id="SM00729">
    <property type="entry name" value="Elp3"/>
    <property type="match status" value="1"/>
</dbReference>
<dbReference type="SUPFAM" id="SSF102114">
    <property type="entry name" value="Radical SAM enzymes"/>
    <property type="match status" value="1"/>
</dbReference>
<dbReference type="PROSITE" id="PS01305">
    <property type="entry name" value="MOAA_NIFB_PQQE"/>
    <property type="match status" value="1"/>
</dbReference>
<dbReference type="PROSITE" id="PS51918">
    <property type="entry name" value="RADICAL_SAM"/>
    <property type="match status" value="1"/>
</dbReference>